<feature type="chain" id="PRO_0000214455" description="Cell division protein FtsB">
    <location>
        <begin position="1"/>
        <end position="103"/>
    </location>
</feature>
<feature type="topological domain" description="Cytoplasmic" evidence="1">
    <location>
        <begin position="1"/>
        <end position="3"/>
    </location>
</feature>
<feature type="transmembrane region" description="Helical" evidence="1">
    <location>
        <begin position="4"/>
        <end position="21"/>
    </location>
</feature>
<feature type="topological domain" description="Periplasmic" evidence="1">
    <location>
        <begin position="22"/>
        <end position="103"/>
    </location>
</feature>
<feature type="coiled-coil region" evidence="1">
    <location>
        <begin position="33"/>
        <end position="62"/>
    </location>
</feature>
<reference key="1">
    <citation type="journal article" date="2001" name="Nature">
        <title>Complete genome sequence of a multiple drug resistant Salmonella enterica serovar Typhi CT18.</title>
        <authorList>
            <person name="Parkhill J."/>
            <person name="Dougan G."/>
            <person name="James K.D."/>
            <person name="Thomson N.R."/>
            <person name="Pickard D."/>
            <person name="Wain J."/>
            <person name="Churcher C.M."/>
            <person name="Mungall K.L."/>
            <person name="Bentley S.D."/>
            <person name="Holden M.T.G."/>
            <person name="Sebaihia M."/>
            <person name="Baker S."/>
            <person name="Basham D."/>
            <person name="Brooks K."/>
            <person name="Chillingworth T."/>
            <person name="Connerton P."/>
            <person name="Cronin A."/>
            <person name="Davis P."/>
            <person name="Davies R.M."/>
            <person name="Dowd L."/>
            <person name="White N."/>
            <person name="Farrar J."/>
            <person name="Feltwell T."/>
            <person name="Hamlin N."/>
            <person name="Haque A."/>
            <person name="Hien T.T."/>
            <person name="Holroyd S."/>
            <person name="Jagels K."/>
            <person name="Krogh A."/>
            <person name="Larsen T.S."/>
            <person name="Leather S."/>
            <person name="Moule S."/>
            <person name="O'Gaora P."/>
            <person name="Parry C."/>
            <person name="Quail M.A."/>
            <person name="Rutherford K.M."/>
            <person name="Simmonds M."/>
            <person name="Skelton J."/>
            <person name="Stevens K."/>
            <person name="Whitehead S."/>
            <person name="Barrell B.G."/>
        </authorList>
    </citation>
    <scope>NUCLEOTIDE SEQUENCE [LARGE SCALE GENOMIC DNA]</scope>
    <source>
        <strain>CT18</strain>
    </source>
</reference>
<reference key="2">
    <citation type="journal article" date="2003" name="J. Bacteriol.">
        <title>Comparative genomics of Salmonella enterica serovar Typhi strains Ty2 and CT18.</title>
        <authorList>
            <person name="Deng W."/>
            <person name="Liou S.-R."/>
            <person name="Plunkett G. III"/>
            <person name="Mayhew G.F."/>
            <person name="Rose D.J."/>
            <person name="Burland V."/>
            <person name="Kodoyianni V."/>
            <person name="Schwartz D.C."/>
            <person name="Blattner F.R."/>
        </authorList>
    </citation>
    <scope>NUCLEOTIDE SEQUENCE [LARGE SCALE GENOMIC DNA]</scope>
    <source>
        <strain>ATCC 700931 / Ty2</strain>
    </source>
</reference>
<comment type="function">
    <text evidence="1">Essential cell division protein. May link together the upstream cell division proteins, which are predominantly cytoplasmic, with the downstream cell division proteins, which are predominantly periplasmic.</text>
</comment>
<comment type="subunit">
    <text evidence="1">Part of a complex composed of FtsB, FtsL and FtsQ.</text>
</comment>
<comment type="subcellular location">
    <subcellularLocation>
        <location evidence="1">Cell inner membrane</location>
        <topology evidence="1">Single-pass type II membrane protein</topology>
    </subcellularLocation>
    <text evidence="1">Localizes to the division septum.</text>
</comment>
<comment type="similarity">
    <text evidence="1">Belongs to the FtsB family.</text>
</comment>
<accession>P64163</accession>
<accession>Q8XEP2</accession>
<sequence length="103" mass="11575">MGKLTLLLLALLVWLQYSLWFGKNGIHDYSRVNDDVVAQQATNAKLKARNDQLFAEIDDLNGGQEAIEERARNELSMTKPGETFYRLVPDASKRAATAGQTHR</sequence>
<proteinExistence type="inferred from homology"/>
<gene>
    <name evidence="1" type="primary">ftsB</name>
    <name type="ordered locus">STY3056</name>
    <name type="ordered locus">t2832</name>
</gene>
<organism>
    <name type="scientific">Salmonella typhi</name>
    <dbReference type="NCBI Taxonomy" id="90370"/>
    <lineage>
        <taxon>Bacteria</taxon>
        <taxon>Pseudomonadati</taxon>
        <taxon>Pseudomonadota</taxon>
        <taxon>Gammaproteobacteria</taxon>
        <taxon>Enterobacterales</taxon>
        <taxon>Enterobacteriaceae</taxon>
        <taxon>Salmonella</taxon>
    </lineage>
</organism>
<dbReference type="EMBL" id="AL513382">
    <property type="protein sequence ID" value="CAD06037.1"/>
    <property type="molecule type" value="Genomic_DNA"/>
</dbReference>
<dbReference type="EMBL" id="AE014613">
    <property type="protein sequence ID" value="AAO70389.1"/>
    <property type="molecule type" value="Genomic_DNA"/>
</dbReference>
<dbReference type="RefSeq" id="NP_457320.1">
    <property type="nucleotide sequence ID" value="NC_003198.1"/>
</dbReference>
<dbReference type="RefSeq" id="WP_000517480.1">
    <property type="nucleotide sequence ID" value="NZ_WSUR01000005.1"/>
</dbReference>
<dbReference type="SMR" id="P64163"/>
<dbReference type="STRING" id="220341.gene:17586947"/>
<dbReference type="KEGG" id="stt:t2832"/>
<dbReference type="KEGG" id="sty:STY3056"/>
<dbReference type="PATRIC" id="fig|220341.7.peg.3109"/>
<dbReference type="eggNOG" id="COG2919">
    <property type="taxonomic scope" value="Bacteria"/>
</dbReference>
<dbReference type="HOGENOM" id="CLU_134863_5_2_6"/>
<dbReference type="OMA" id="YELGMVK"/>
<dbReference type="OrthoDB" id="7061211at2"/>
<dbReference type="Proteomes" id="UP000000541">
    <property type="component" value="Chromosome"/>
</dbReference>
<dbReference type="Proteomes" id="UP000002670">
    <property type="component" value="Chromosome"/>
</dbReference>
<dbReference type="GO" id="GO:0032153">
    <property type="term" value="C:cell division site"/>
    <property type="evidence" value="ECO:0007669"/>
    <property type="project" value="UniProtKB-UniRule"/>
</dbReference>
<dbReference type="GO" id="GO:0030428">
    <property type="term" value="C:cell septum"/>
    <property type="evidence" value="ECO:0007669"/>
    <property type="project" value="TreeGrafter"/>
</dbReference>
<dbReference type="GO" id="GO:0005886">
    <property type="term" value="C:plasma membrane"/>
    <property type="evidence" value="ECO:0007669"/>
    <property type="project" value="UniProtKB-SubCell"/>
</dbReference>
<dbReference type="GO" id="GO:0043093">
    <property type="term" value="P:FtsZ-dependent cytokinesis"/>
    <property type="evidence" value="ECO:0007669"/>
    <property type="project" value="UniProtKB-UniRule"/>
</dbReference>
<dbReference type="FunFam" id="1.20.5.400:FF:000001">
    <property type="entry name" value="Cell division protein FtsB"/>
    <property type="match status" value="1"/>
</dbReference>
<dbReference type="Gene3D" id="1.20.5.400">
    <property type="match status" value="1"/>
</dbReference>
<dbReference type="HAMAP" id="MF_00599">
    <property type="entry name" value="FtsB"/>
    <property type="match status" value="1"/>
</dbReference>
<dbReference type="InterPro" id="IPR023081">
    <property type="entry name" value="Cell_div_FtsB"/>
</dbReference>
<dbReference type="InterPro" id="IPR007060">
    <property type="entry name" value="FtsL/DivIC"/>
</dbReference>
<dbReference type="NCBIfam" id="NF002058">
    <property type="entry name" value="PRK00888.1"/>
    <property type="match status" value="1"/>
</dbReference>
<dbReference type="PANTHER" id="PTHR37485">
    <property type="entry name" value="CELL DIVISION PROTEIN FTSB"/>
    <property type="match status" value="1"/>
</dbReference>
<dbReference type="PANTHER" id="PTHR37485:SF1">
    <property type="entry name" value="CELL DIVISION PROTEIN FTSB"/>
    <property type="match status" value="1"/>
</dbReference>
<dbReference type="Pfam" id="PF04977">
    <property type="entry name" value="DivIC"/>
    <property type="match status" value="1"/>
</dbReference>
<protein>
    <recommendedName>
        <fullName evidence="1">Cell division protein FtsB</fullName>
    </recommendedName>
</protein>
<keyword id="KW-0131">Cell cycle</keyword>
<keyword id="KW-0132">Cell division</keyword>
<keyword id="KW-0997">Cell inner membrane</keyword>
<keyword id="KW-1003">Cell membrane</keyword>
<keyword id="KW-0175">Coiled coil</keyword>
<keyword id="KW-0472">Membrane</keyword>
<keyword id="KW-0812">Transmembrane</keyword>
<keyword id="KW-1133">Transmembrane helix</keyword>
<evidence type="ECO:0000255" key="1">
    <source>
        <dbReference type="HAMAP-Rule" id="MF_00599"/>
    </source>
</evidence>
<name>FTSB_SALTI</name>